<proteinExistence type="inferred from homology"/>
<evidence type="ECO:0000255" key="1">
    <source>
        <dbReference type="HAMAP-Rule" id="MF_00484"/>
    </source>
</evidence>
<name>GLGA_SALPB</name>
<reference key="1">
    <citation type="submission" date="2007-11" db="EMBL/GenBank/DDBJ databases">
        <authorList>
            <consortium name="The Salmonella enterica serovar Paratyphi B Genome Sequencing Project"/>
            <person name="McClelland M."/>
            <person name="Sanderson E.K."/>
            <person name="Porwollik S."/>
            <person name="Spieth J."/>
            <person name="Clifton W.S."/>
            <person name="Fulton R."/>
            <person name="Cordes M."/>
            <person name="Wollam A."/>
            <person name="Shah N."/>
            <person name="Pepin K."/>
            <person name="Bhonagiri V."/>
            <person name="Nash W."/>
            <person name="Johnson M."/>
            <person name="Thiruvilangam P."/>
            <person name="Wilson R."/>
        </authorList>
    </citation>
    <scope>NUCLEOTIDE SEQUENCE [LARGE SCALE GENOMIC DNA]</scope>
    <source>
        <strain>ATCC BAA-1250 / SPB7</strain>
    </source>
</reference>
<sequence length="477" mass="52946">MQVLHVCSEMFPLLKTGGLADVIGALPAAQIADGVDVRVLLPGFPDIRRGIPDAHVVSRRDTFAGKISLLFGHYNGVGIYLIDAPHLYERPGSPYHDTNLYAYTDNVLRFALLGWVGCEMACGLDPFWRPDVVHAHDWHAGLAPAYLAARGRPAKSVFTVHNLAYQGMFYAKHMDDIELPWSFFNMHGLEFNGQLSFLKAGLYYADHITAVSPTYAREITEPQFAYGMEGLLRQRHLEGRLSGILNGVDEKIWNPESDLLLASRYTRDTLEEKAENKRQLQIAMGLKVNDKVPLFAVVSRLTNQKGLDLVLEALPGLLEQGGQLALLGAGDPVLQEGFLAAAAEHPGQVGVQIGYHEAFSHRIMGGADVILVPSRFEPCGLTQLYGLKYGTLPLVRRTGGLADTVSDSSLENLADGIASGFVFEDSNAWSLLRAIRRAFVLWSRPSLWRFVQRQAMAMDFSWQVAAKSYRELYYRLK</sequence>
<accession>A9MTV1</accession>
<feature type="chain" id="PRO_1000081331" description="Glycogen synthase">
    <location>
        <begin position="1"/>
        <end position="477"/>
    </location>
</feature>
<feature type="binding site" evidence="1">
    <location>
        <position position="15"/>
    </location>
    <ligand>
        <name>ADP-alpha-D-glucose</name>
        <dbReference type="ChEBI" id="CHEBI:57498"/>
    </ligand>
</feature>
<protein>
    <recommendedName>
        <fullName evidence="1">Glycogen synthase</fullName>
        <ecNumber evidence="1">2.4.1.21</ecNumber>
    </recommendedName>
    <alternativeName>
        <fullName evidence="1">Starch [bacterial glycogen] synthase</fullName>
    </alternativeName>
</protein>
<gene>
    <name evidence="1" type="primary">glgA</name>
    <name type="ordered locus">SPAB_04390</name>
</gene>
<keyword id="KW-0320">Glycogen biosynthesis</keyword>
<keyword id="KW-0328">Glycosyltransferase</keyword>
<keyword id="KW-0808">Transferase</keyword>
<dbReference type="EC" id="2.4.1.21" evidence="1"/>
<dbReference type="EMBL" id="CP000886">
    <property type="protein sequence ID" value="ABX69706.1"/>
    <property type="molecule type" value="Genomic_DNA"/>
</dbReference>
<dbReference type="RefSeq" id="WP_001197669.1">
    <property type="nucleotide sequence ID" value="NC_010102.1"/>
</dbReference>
<dbReference type="SMR" id="A9MTV1"/>
<dbReference type="CAZy" id="GT5">
    <property type="family name" value="Glycosyltransferase Family 5"/>
</dbReference>
<dbReference type="KEGG" id="spq:SPAB_04390"/>
<dbReference type="PATRIC" id="fig|1016998.12.peg.4133"/>
<dbReference type="HOGENOM" id="CLU_009583_18_4_6"/>
<dbReference type="BioCyc" id="SENT1016998:SPAB_RS17870-MONOMER"/>
<dbReference type="UniPathway" id="UPA00164"/>
<dbReference type="Proteomes" id="UP000008556">
    <property type="component" value="Chromosome"/>
</dbReference>
<dbReference type="GO" id="GO:0005829">
    <property type="term" value="C:cytosol"/>
    <property type="evidence" value="ECO:0007669"/>
    <property type="project" value="TreeGrafter"/>
</dbReference>
<dbReference type="GO" id="GO:0009011">
    <property type="term" value="F:alpha-1,4-glucan glucosyltransferase (ADP-glucose donor) activity"/>
    <property type="evidence" value="ECO:0007669"/>
    <property type="project" value="UniProtKB-UniRule"/>
</dbReference>
<dbReference type="GO" id="GO:0004373">
    <property type="term" value="F:alpha-1,4-glucan glucosyltransferase (UDP-glucose donor) activity"/>
    <property type="evidence" value="ECO:0007669"/>
    <property type="project" value="InterPro"/>
</dbReference>
<dbReference type="GO" id="GO:0005978">
    <property type="term" value="P:glycogen biosynthetic process"/>
    <property type="evidence" value="ECO:0007669"/>
    <property type="project" value="UniProtKB-UniRule"/>
</dbReference>
<dbReference type="CDD" id="cd03791">
    <property type="entry name" value="GT5_Glycogen_synthase_DULL1-like"/>
    <property type="match status" value="1"/>
</dbReference>
<dbReference type="FunFam" id="3.40.50.2000:FF:000008">
    <property type="entry name" value="Glycogen synthase"/>
    <property type="match status" value="1"/>
</dbReference>
<dbReference type="FunFam" id="3.40.50.2000:FF:000011">
    <property type="entry name" value="Glycogen synthase"/>
    <property type="match status" value="1"/>
</dbReference>
<dbReference type="Gene3D" id="3.40.50.2000">
    <property type="entry name" value="Glycogen Phosphorylase B"/>
    <property type="match status" value="2"/>
</dbReference>
<dbReference type="HAMAP" id="MF_00484">
    <property type="entry name" value="Glycogen_synth"/>
    <property type="match status" value="1"/>
</dbReference>
<dbReference type="InterPro" id="IPR001296">
    <property type="entry name" value="Glyco_trans_1"/>
</dbReference>
<dbReference type="InterPro" id="IPR011835">
    <property type="entry name" value="GS/SS"/>
</dbReference>
<dbReference type="InterPro" id="IPR013534">
    <property type="entry name" value="Starch_synth_cat_dom"/>
</dbReference>
<dbReference type="NCBIfam" id="TIGR02095">
    <property type="entry name" value="glgA"/>
    <property type="match status" value="1"/>
</dbReference>
<dbReference type="NCBIfam" id="NF001899">
    <property type="entry name" value="PRK00654.1-2"/>
    <property type="match status" value="1"/>
</dbReference>
<dbReference type="PANTHER" id="PTHR45825:SF11">
    <property type="entry name" value="ALPHA AMYLASE DOMAIN-CONTAINING PROTEIN"/>
    <property type="match status" value="1"/>
</dbReference>
<dbReference type="PANTHER" id="PTHR45825">
    <property type="entry name" value="GRANULE-BOUND STARCH SYNTHASE 1, CHLOROPLASTIC/AMYLOPLASTIC"/>
    <property type="match status" value="1"/>
</dbReference>
<dbReference type="Pfam" id="PF08323">
    <property type="entry name" value="Glyco_transf_5"/>
    <property type="match status" value="1"/>
</dbReference>
<dbReference type="Pfam" id="PF00534">
    <property type="entry name" value="Glycos_transf_1"/>
    <property type="match status" value="1"/>
</dbReference>
<dbReference type="SUPFAM" id="SSF53756">
    <property type="entry name" value="UDP-Glycosyltransferase/glycogen phosphorylase"/>
    <property type="match status" value="1"/>
</dbReference>
<comment type="function">
    <text evidence="1">Synthesizes alpha-1,4-glucan chains using ADP-glucose.</text>
</comment>
<comment type="catalytic activity">
    <reaction evidence="1">
        <text>[(1-&gt;4)-alpha-D-glucosyl](n) + ADP-alpha-D-glucose = [(1-&gt;4)-alpha-D-glucosyl](n+1) + ADP + H(+)</text>
        <dbReference type="Rhea" id="RHEA:18189"/>
        <dbReference type="Rhea" id="RHEA-COMP:9584"/>
        <dbReference type="Rhea" id="RHEA-COMP:9587"/>
        <dbReference type="ChEBI" id="CHEBI:15378"/>
        <dbReference type="ChEBI" id="CHEBI:15444"/>
        <dbReference type="ChEBI" id="CHEBI:57498"/>
        <dbReference type="ChEBI" id="CHEBI:456216"/>
        <dbReference type="EC" id="2.4.1.21"/>
    </reaction>
</comment>
<comment type="pathway">
    <text evidence="1">Glycan biosynthesis; glycogen biosynthesis.</text>
</comment>
<comment type="similarity">
    <text evidence="1">Belongs to the glycosyltransferase 1 family. Bacterial/plant glycogen synthase subfamily.</text>
</comment>
<organism>
    <name type="scientific">Salmonella paratyphi B (strain ATCC BAA-1250 / SPB7)</name>
    <dbReference type="NCBI Taxonomy" id="1016998"/>
    <lineage>
        <taxon>Bacteria</taxon>
        <taxon>Pseudomonadati</taxon>
        <taxon>Pseudomonadota</taxon>
        <taxon>Gammaproteobacteria</taxon>
        <taxon>Enterobacterales</taxon>
        <taxon>Enterobacteriaceae</taxon>
        <taxon>Salmonella</taxon>
    </lineage>
</organism>